<organism>
    <name type="scientific">Corynebacterium glutamicum (strain R)</name>
    <dbReference type="NCBI Taxonomy" id="340322"/>
    <lineage>
        <taxon>Bacteria</taxon>
        <taxon>Bacillati</taxon>
        <taxon>Actinomycetota</taxon>
        <taxon>Actinomycetes</taxon>
        <taxon>Mycobacteriales</taxon>
        <taxon>Corynebacteriaceae</taxon>
        <taxon>Corynebacterium</taxon>
    </lineage>
</organism>
<feature type="chain" id="PRO_1000014695" description="Large ribosomal subunit protein bL31B">
    <location>
        <begin position="1"/>
        <end position="88"/>
    </location>
</feature>
<evidence type="ECO:0000255" key="1">
    <source>
        <dbReference type="HAMAP-Rule" id="MF_00502"/>
    </source>
</evidence>
<evidence type="ECO:0000305" key="2"/>
<comment type="subunit">
    <text evidence="1">Part of the 50S ribosomal subunit.</text>
</comment>
<comment type="similarity">
    <text evidence="1">Belongs to the bacterial ribosomal protein bL31 family. Type B subfamily.</text>
</comment>
<protein>
    <recommendedName>
        <fullName evidence="1">Large ribosomal subunit protein bL31B</fullName>
    </recommendedName>
    <alternativeName>
        <fullName evidence="2">50S ribosomal protein L31 type B</fullName>
    </alternativeName>
</protein>
<sequence length="88" mass="10009">MKKDIHPDYHAVVFQDAGTGFQFLTKSTASSDRTVSWEDGNEYPLIVVDVTSESHPFWTGAQRVMDTAGRVEKFERRFGGMARRKKKA</sequence>
<reference key="1">
    <citation type="journal article" date="2007" name="Microbiology">
        <title>Comparative analysis of the Corynebacterium glutamicum group and complete genome sequence of strain R.</title>
        <authorList>
            <person name="Yukawa H."/>
            <person name="Omumasaba C.A."/>
            <person name="Nonaka H."/>
            <person name="Kos P."/>
            <person name="Okai N."/>
            <person name="Suzuki N."/>
            <person name="Suda M."/>
            <person name="Tsuge Y."/>
            <person name="Watanabe J."/>
            <person name="Ikeda Y."/>
            <person name="Vertes A.A."/>
            <person name="Inui M."/>
        </authorList>
    </citation>
    <scope>NUCLEOTIDE SEQUENCE [LARGE SCALE GENOMIC DNA]</scope>
    <source>
        <strain>R</strain>
    </source>
</reference>
<keyword id="KW-0687">Ribonucleoprotein</keyword>
<keyword id="KW-0689">Ribosomal protein</keyword>
<gene>
    <name evidence="1" type="primary">rpmE2</name>
    <name type="ordered locus">cgR_0986</name>
</gene>
<accession>A4QCL4</accession>
<dbReference type="EMBL" id="AP009044">
    <property type="protein sequence ID" value="BAF53961.1"/>
    <property type="molecule type" value="Genomic_DNA"/>
</dbReference>
<dbReference type="RefSeq" id="WP_003858446.1">
    <property type="nucleotide sequence ID" value="NC_009342.1"/>
</dbReference>
<dbReference type="SMR" id="A4QCL4"/>
<dbReference type="GeneID" id="1018866"/>
<dbReference type="KEGG" id="cgt:cgR_0986"/>
<dbReference type="HOGENOM" id="CLU_114306_2_1_11"/>
<dbReference type="PhylomeDB" id="A4QCL4"/>
<dbReference type="Proteomes" id="UP000006698">
    <property type="component" value="Chromosome"/>
</dbReference>
<dbReference type="GO" id="GO:1990904">
    <property type="term" value="C:ribonucleoprotein complex"/>
    <property type="evidence" value="ECO:0007669"/>
    <property type="project" value="UniProtKB-KW"/>
</dbReference>
<dbReference type="GO" id="GO:0005840">
    <property type="term" value="C:ribosome"/>
    <property type="evidence" value="ECO:0007669"/>
    <property type="project" value="UniProtKB-KW"/>
</dbReference>
<dbReference type="GO" id="GO:0003735">
    <property type="term" value="F:structural constituent of ribosome"/>
    <property type="evidence" value="ECO:0007669"/>
    <property type="project" value="InterPro"/>
</dbReference>
<dbReference type="GO" id="GO:0006412">
    <property type="term" value="P:translation"/>
    <property type="evidence" value="ECO:0007669"/>
    <property type="project" value="UniProtKB-UniRule"/>
</dbReference>
<dbReference type="Gene3D" id="4.10.830.30">
    <property type="entry name" value="Ribosomal protein L31"/>
    <property type="match status" value="1"/>
</dbReference>
<dbReference type="HAMAP" id="MF_00502">
    <property type="entry name" value="Ribosomal_bL31_2"/>
    <property type="match status" value="1"/>
</dbReference>
<dbReference type="InterPro" id="IPR034704">
    <property type="entry name" value="Ribosomal_bL28/bL31-like_sf"/>
</dbReference>
<dbReference type="InterPro" id="IPR002150">
    <property type="entry name" value="Ribosomal_bL31"/>
</dbReference>
<dbReference type="InterPro" id="IPR027493">
    <property type="entry name" value="Ribosomal_bL31_B"/>
</dbReference>
<dbReference type="InterPro" id="IPR042105">
    <property type="entry name" value="Ribosomal_bL31_sf"/>
</dbReference>
<dbReference type="NCBIfam" id="TIGR00105">
    <property type="entry name" value="L31"/>
    <property type="match status" value="1"/>
</dbReference>
<dbReference type="NCBIfam" id="NF002462">
    <property type="entry name" value="PRK01678.1"/>
    <property type="match status" value="1"/>
</dbReference>
<dbReference type="PANTHER" id="PTHR33280">
    <property type="entry name" value="50S RIBOSOMAL PROTEIN L31, CHLOROPLASTIC"/>
    <property type="match status" value="1"/>
</dbReference>
<dbReference type="PANTHER" id="PTHR33280:SF1">
    <property type="entry name" value="LARGE RIBOSOMAL SUBUNIT PROTEIN BL31C"/>
    <property type="match status" value="1"/>
</dbReference>
<dbReference type="Pfam" id="PF01197">
    <property type="entry name" value="Ribosomal_L31"/>
    <property type="match status" value="1"/>
</dbReference>
<dbReference type="PRINTS" id="PR01249">
    <property type="entry name" value="RIBOSOMALL31"/>
</dbReference>
<dbReference type="SUPFAM" id="SSF143800">
    <property type="entry name" value="L28p-like"/>
    <property type="match status" value="1"/>
</dbReference>
<dbReference type="PROSITE" id="PS01143">
    <property type="entry name" value="RIBOSOMAL_L31"/>
    <property type="match status" value="1"/>
</dbReference>
<proteinExistence type="inferred from homology"/>
<name>RL31B_CORGB</name>